<sequence length="520" mass="60502">MAAAEPDADPKAAIPVDLRRERRLVCVEYPGVVRNEAKMLQTLGGEESVSRIYTDPTKRLELYFRPKDPYCHPVCANRFSTSSLLLRIRKRTRRRRGVLGDEAHPQVTFNLEIIGIISTIYKFQGMSDFQYLAVHTEAGGKHVSMYDRVLMRKPEKEEFFHQELPLYIPPPIFSRLDTPVDYFYRPETQHREGYHNPTISGENLIGLSRARRPHNAIFVNFEDTEVPEQPLEAAVQTWKKACTNPIDQKVEEELRKLFDIRPVWSRNAVKSNVSVHPDKLKILLPYMAYYMITGPWRSLWIRFGYDPRKHPDAKIYQVLDFRIRCGMKYGYGSRDMPVKAKRSTYNYSLPITVKKTSNQPGTMHDLKQGLGPSGTDGPRKLTYNKYKLKDSVYIFREGALPPYRQMFYQLCDLNVEELQKIVHRNDGTETVCTERDGWCLPKTTDHLRDTMSLMILQTIRSERPALFSNTGKADRGKEQLMFESGEEEEEEEEEEEEEEEDFKPSDGSENEMETEILDYV</sequence>
<reference key="1">
    <citation type="journal article" date="2004" name="Genome Res.">
        <title>The status, quality, and expansion of the NIH full-length cDNA project: the Mammalian Gene Collection (MGC).</title>
        <authorList>
            <consortium name="The MGC Project Team"/>
        </authorList>
    </citation>
    <scope>NUCLEOTIDE SEQUENCE [LARGE SCALE MRNA] (ISOFORMS 1 AND 2)</scope>
    <source>
        <tissue>Eye</tissue>
    </source>
</reference>
<reference key="2">
    <citation type="journal article" date="2005" name="Science">
        <title>The transcriptional landscape of the mammalian genome.</title>
        <authorList>
            <person name="Carninci P."/>
            <person name="Kasukawa T."/>
            <person name="Katayama S."/>
            <person name="Gough J."/>
            <person name="Frith M.C."/>
            <person name="Maeda N."/>
            <person name="Oyama R."/>
            <person name="Ravasi T."/>
            <person name="Lenhard B."/>
            <person name="Wells C."/>
            <person name="Kodzius R."/>
            <person name="Shimokawa K."/>
            <person name="Bajic V.B."/>
            <person name="Brenner S.E."/>
            <person name="Batalov S."/>
            <person name="Forrest A.R."/>
            <person name="Zavolan M."/>
            <person name="Davis M.J."/>
            <person name="Wilming L.G."/>
            <person name="Aidinis V."/>
            <person name="Allen J.E."/>
            <person name="Ambesi-Impiombato A."/>
            <person name="Apweiler R."/>
            <person name="Aturaliya R.N."/>
            <person name="Bailey T.L."/>
            <person name="Bansal M."/>
            <person name="Baxter L."/>
            <person name="Beisel K.W."/>
            <person name="Bersano T."/>
            <person name="Bono H."/>
            <person name="Chalk A.M."/>
            <person name="Chiu K.P."/>
            <person name="Choudhary V."/>
            <person name="Christoffels A."/>
            <person name="Clutterbuck D.R."/>
            <person name="Crowe M.L."/>
            <person name="Dalla E."/>
            <person name="Dalrymple B.P."/>
            <person name="de Bono B."/>
            <person name="Della Gatta G."/>
            <person name="di Bernardo D."/>
            <person name="Down T."/>
            <person name="Engstrom P."/>
            <person name="Fagiolini M."/>
            <person name="Faulkner G."/>
            <person name="Fletcher C.F."/>
            <person name="Fukushima T."/>
            <person name="Furuno M."/>
            <person name="Futaki S."/>
            <person name="Gariboldi M."/>
            <person name="Georgii-Hemming P."/>
            <person name="Gingeras T.R."/>
            <person name="Gojobori T."/>
            <person name="Green R.E."/>
            <person name="Gustincich S."/>
            <person name="Harbers M."/>
            <person name="Hayashi Y."/>
            <person name="Hensch T.K."/>
            <person name="Hirokawa N."/>
            <person name="Hill D."/>
            <person name="Huminiecki L."/>
            <person name="Iacono M."/>
            <person name="Ikeo K."/>
            <person name="Iwama A."/>
            <person name="Ishikawa T."/>
            <person name="Jakt M."/>
            <person name="Kanapin A."/>
            <person name="Katoh M."/>
            <person name="Kawasawa Y."/>
            <person name="Kelso J."/>
            <person name="Kitamura H."/>
            <person name="Kitano H."/>
            <person name="Kollias G."/>
            <person name="Krishnan S.P."/>
            <person name="Kruger A."/>
            <person name="Kummerfeld S.K."/>
            <person name="Kurochkin I.V."/>
            <person name="Lareau L.F."/>
            <person name="Lazarevic D."/>
            <person name="Lipovich L."/>
            <person name="Liu J."/>
            <person name="Liuni S."/>
            <person name="McWilliam S."/>
            <person name="Madan Babu M."/>
            <person name="Madera M."/>
            <person name="Marchionni L."/>
            <person name="Matsuda H."/>
            <person name="Matsuzawa S."/>
            <person name="Miki H."/>
            <person name="Mignone F."/>
            <person name="Miyake S."/>
            <person name="Morris K."/>
            <person name="Mottagui-Tabar S."/>
            <person name="Mulder N."/>
            <person name="Nakano N."/>
            <person name="Nakauchi H."/>
            <person name="Ng P."/>
            <person name="Nilsson R."/>
            <person name="Nishiguchi S."/>
            <person name="Nishikawa S."/>
            <person name="Nori F."/>
            <person name="Ohara O."/>
            <person name="Okazaki Y."/>
            <person name="Orlando V."/>
            <person name="Pang K.C."/>
            <person name="Pavan W.J."/>
            <person name="Pavesi G."/>
            <person name="Pesole G."/>
            <person name="Petrovsky N."/>
            <person name="Piazza S."/>
            <person name="Reed J."/>
            <person name="Reid J.F."/>
            <person name="Ring B.Z."/>
            <person name="Ringwald M."/>
            <person name="Rost B."/>
            <person name="Ruan Y."/>
            <person name="Salzberg S.L."/>
            <person name="Sandelin A."/>
            <person name="Schneider C."/>
            <person name="Schoenbach C."/>
            <person name="Sekiguchi K."/>
            <person name="Semple C.A."/>
            <person name="Seno S."/>
            <person name="Sessa L."/>
            <person name="Sheng Y."/>
            <person name="Shibata Y."/>
            <person name="Shimada H."/>
            <person name="Shimada K."/>
            <person name="Silva D."/>
            <person name="Sinclair B."/>
            <person name="Sperling S."/>
            <person name="Stupka E."/>
            <person name="Sugiura K."/>
            <person name="Sultana R."/>
            <person name="Takenaka Y."/>
            <person name="Taki K."/>
            <person name="Tammoja K."/>
            <person name="Tan S.L."/>
            <person name="Tang S."/>
            <person name="Taylor M.S."/>
            <person name="Tegner J."/>
            <person name="Teichmann S.A."/>
            <person name="Ueda H.R."/>
            <person name="van Nimwegen E."/>
            <person name="Verardo R."/>
            <person name="Wei C.L."/>
            <person name="Yagi K."/>
            <person name="Yamanishi H."/>
            <person name="Zabarovsky E."/>
            <person name="Zhu S."/>
            <person name="Zimmer A."/>
            <person name="Hide W."/>
            <person name="Bult C."/>
            <person name="Grimmond S.M."/>
            <person name="Teasdale R.D."/>
            <person name="Liu E.T."/>
            <person name="Brusic V."/>
            <person name="Quackenbush J."/>
            <person name="Wahlestedt C."/>
            <person name="Mattick J.S."/>
            <person name="Hume D.A."/>
            <person name="Kai C."/>
            <person name="Sasaki D."/>
            <person name="Tomaru Y."/>
            <person name="Fukuda S."/>
            <person name="Kanamori-Katayama M."/>
            <person name="Suzuki M."/>
            <person name="Aoki J."/>
            <person name="Arakawa T."/>
            <person name="Iida J."/>
            <person name="Imamura K."/>
            <person name="Itoh M."/>
            <person name="Kato T."/>
            <person name="Kawaji H."/>
            <person name="Kawagashira N."/>
            <person name="Kawashima T."/>
            <person name="Kojima M."/>
            <person name="Kondo S."/>
            <person name="Konno H."/>
            <person name="Nakano K."/>
            <person name="Ninomiya N."/>
            <person name="Nishio T."/>
            <person name="Okada M."/>
            <person name="Plessy C."/>
            <person name="Shibata K."/>
            <person name="Shiraki T."/>
            <person name="Suzuki S."/>
            <person name="Tagami M."/>
            <person name="Waki K."/>
            <person name="Watahiki A."/>
            <person name="Okamura-Oho Y."/>
            <person name="Suzuki H."/>
            <person name="Kawai J."/>
            <person name="Hayashizaki Y."/>
        </authorList>
    </citation>
    <scope>NUCLEOTIDE SEQUENCE [LARGE SCALE MRNA] OF 37-520 (ISOFORM 2)</scope>
    <source>
        <strain>C57BL/6J</strain>
        <tissue>Brain</tissue>
    </source>
</reference>
<organism>
    <name type="scientific">Mus musculus</name>
    <name type="common">Mouse</name>
    <dbReference type="NCBI Taxonomy" id="10090"/>
    <lineage>
        <taxon>Eukaryota</taxon>
        <taxon>Metazoa</taxon>
        <taxon>Chordata</taxon>
        <taxon>Craniata</taxon>
        <taxon>Vertebrata</taxon>
        <taxon>Euteleostomi</taxon>
        <taxon>Mammalia</taxon>
        <taxon>Eutheria</taxon>
        <taxon>Euarchontoglires</taxon>
        <taxon>Glires</taxon>
        <taxon>Rodentia</taxon>
        <taxon>Myomorpha</taxon>
        <taxon>Muroidea</taxon>
        <taxon>Muridae</taxon>
        <taxon>Murinae</taxon>
        <taxon>Mus</taxon>
        <taxon>Mus</taxon>
    </lineage>
</organism>
<feature type="initiator methionine" description="Removed" evidence="2">
    <location>
        <position position="1"/>
    </location>
</feature>
<feature type="chain" id="PRO_0000209716" description="General transcription factor 3C polypeptide 5">
    <location>
        <begin position="2"/>
        <end position="520"/>
    </location>
</feature>
<feature type="region of interest" description="Disordered" evidence="3">
    <location>
        <begin position="466"/>
        <end position="520"/>
    </location>
</feature>
<feature type="compositionally biased region" description="Acidic residues" evidence="3">
    <location>
        <begin position="484"/>
        <end position="501"/>
    </location>
</feature>
<feature type="compositionally biased region" description="Acidic residues" evidence="3">
    <location>
        <begin position="508"/>
        <end position="520"/>
    </location>
</feature>
<feature type="modified residue" description="N-acetylalanine" evidence="2">
    <location>
        <position position="2"/>
    </location>
</feature>
<feature type="splice variant" id="VSP_010356" description="In isoform 2." evidence="4 5">
    <location>
        <begin position="465"/>
        <end position="470"/>
    </location>
</feature>
<feature type="sequence conflict" description="In Ref. 1; AAH27247." evidence="6" ref="1">
    <original>M</original>
    <variation>T</variation>
    <location>
        <position position="145"/>
    </location>
</feature>
<dbReference type="EMBL" id="BC027055">
    <property type="protein sequence ID" value="AAH27055.1"/>
    <property type="molecule type" value="mRNA"/>
</dbReference>
<dbReference type="EMBL" id="BC027247">
    <property type="protein sequence ID" value="AAH27247.1"/>
    <property type="molecule type" value="mRNA"/>
</dbReference>
<dbReference type="EMBL" id="BC039171">
    <property type="protein sequence ID" value="AAH39171.1"/>
    <property type="molecule type" value="mRNA"/>
</dbReference>
<dbReference type="EMBL" id="AK045419">
    <property type="protein sequence ID" value="BAC32354.1"/>
    <property type="molecule type" value="mRNA"/>
</dbReference>
<dbReference type="CCDS" id="CCDS15842.1">
    <molecule id="Q8R2T8-2"/>
</dbReference>
<dbReference type="CCDS" id="CCDS71012.1">
    <molecule id="Q8R2T8-1"/>
</dbReference>
<dbReference type="RefSeq" id="NP_001277413.1">
    <molecule id="Q8R2T8-1"/>
    <property type="nucleotide sequence ID" value="NM_001290484.1"/>
</dbReference>
<dbReference type="RefSeq" id="NP_683730.1">
    <molecule id="Q8R2T8-2"/>
    <property type="nucleotide sequence ID" value="NM_148928.3"/>
</dbReference>
<dbReference type="SMR" id="Q8R2T8"/>
<dbReference type="BioGRID" id="213934">
    <property type="interactions" value="7"/>
</dbReference>
<dbReference type="FunCoup" id="Q8R2T8">
    <property type="interactions" value="2226"/>
</dbReference>
<dbReference type="IntAct" id="Q8R2T8">
    <property type="interactions" value="2"/>
</dbReference>
<dbReference type="MINT" id="Q8R2T8"/>
<dbReference type="STRING" id="10090.ENSMUSP00000109521"/>
<dbReference type="iPTMnet" id="Q8R2T8"/>
<dbReference type="PhosphoSitePlus" id="Q8R2T8"/>
<dbReference type="SwissPalm" id="Q8R2T8"/>
<dbReference type="PaxDb" id="10090-ENSMUSP00000028157"/>
<dbReference type="ProteomicsDB" id="263294">
    <molecule id="Q8R2T8-1"/>
</dbReference>
<dbReference type="ProteomicsDB" id="263295">
    <molecule id="Q8R2T8-2"/>
</dbReference>
<dbReference type="Pumba" id="Q8R2T8"/>
<dbReference type="Antibodypedia" id="18242">
    <property type="antibodies" value="196 antibodies from 24 providers"/>
</dbReference>
<dbReference type="DNASU" id="70239"/>
<dbReference type="Ensembl" id="ENSMUST00000028157.9">
    <molecule id="Q8R2T8-2"/>
    <property type="protein sequence ID" value="ENSMUSP00000028157.9"/>
    <property type="gene ID" value="ENSMUSG00000026816.15"/>
</dbReference>
<dbReference type="Ensembl" id="ENSMUST00000113889.9">
    <molecule id="Q8R2T8-1"/>
    <property type="protein sequence ID" value="ENSMUSP00000109521.3"/>
    <property type="gene ID" value="ENSMUSG00000026816.15"/>
</dbReference>
<dbReference type="GeneID" id="70239"/>
<dbReference type="KEGG" id="mmu:70239"/>
<dbReference type="UCSC" id="uc012bsz.2">
    <molecule id="Q8R2T8-1"/>
    <property type="organism name" value="mouse"/>
</dbReference>
<dbReference type="AGR" id="MGI:1917489"/>
<dbReference type="CTD" id="9328"/>
<dbReference type="MGI" id="MGI:1917489">
    <property type="gene designation" value="Gtf3c5"/>
</dbReference>
<dbReference type="VEuPathDB" id="HostDB:ENSMUSG00000026816"/>
<dbReference type="eggNOG" id="KOG2473">
    <property type="taxonomic scope" value="Eukaryota"/>
</dbReference>
<dbReference type="GeneTree" id="ENSGT00390000004458"/>
<dbReference type="HOGENOM" id="CLU_026463_0_0_1"/>
<dbReference type="InParanoid" id="Q8R2T8"/>
<dbReference type="OMA" id="PPEYFVR"/>
<dbReference type="OrthoDB" id="5598268at2759"/>
<dbReference type="PhylomeDB" id="Q8R2T8"/>
<dbReference type="TreeFam" id="TF313581"/>
<dbReference type="Reactome" id="R-MMU-76061">
    <property type="pathway name" value="RNA Polymerase III Transcription Initiation From Type 1 Promoter"/>
</dbReference>
<dbReference type="Reactome" id="R-MMU-76066">
    <property type="pathway name" value="RNA Polymerase III Transcription Initiation From Type 2 Promoter"/>
</dbReference>
<dbReference type="BioGRID-ORCS" id="70239">
    <property type="hits" value="25 hits in 80 CRISPR screens"/>
</dbReference>
<dbReference type="ChiTaRS" id="Gtf3c5">
    <property type="organism name" value="mouse"/>
</dbReference>
<dbReference type="PRO" id="PR:Q8R2T8"/>
<dbReference type="Proteomes" id="UP000000589">
    <property type="component" value="Chromosome 2"/>
</dbReference>
<dbReference type="RNAct" id="Q8R2T8">
    <property type="molecule type" value="protein"/>
</dbReference>
<dbReference type="Bgee" id="ENSMUSG00000026816">
    <property type="expression patterns" value="Expressed in forelimb bud and 243 other cell types or tissues"/>
</dbReference>
<dbReference type="ExpressionAtlas" id="Q8R2T8">
    <property type="expression patterns" value="baseline and differential"/>
</dbReference>
<dbReference type="GO" id="GO:0005654">
    <property type="term" value="C:nucleoplasm"/>
    <property type="evidence" value="ECO:0007669"/>
    <property type="project" value="Ensembl"/>
</dbReference>
<dbReference type="GO" id="GO:0000127">
    <property type="term" value="C:transcription factor TFIIIC complex"/>
    <property type="evidence" value="ECO:0007669"/>
    <property type="project" value="Ensembl"/>
</dbReference>
<dbReference type="GO" id="GO:0003677">
    <property type="term" value="F:DNA binding"/>
    <property type="evidence" value="ECO:0007669"/>
    <property type="project" value="UniProtKB-KW"/>
</dbReference>
<dbReference type="GO" id="GO:0000995">
    <property type="term" value="F:RNA polymerase III general transcription initiation factor activity"/>
    <property type="evidence" value="ECO:0007669"/>
    <property type="project" value="Ensembl"/>
</dbReference>
<dbReference type="GO" id="GO:0035914">
    <property type="term" value="P:skeletal muscle cell differentiation"/>
    <property type="evidence" value="ECO:0000315"/>
    <property type="project" value="MGI"/>
</dbReference>
<dbReference type="GO" id="GO:0006384">
    <property type="term" value="P:transcription initiation at RNA polymerase III promoter"/>
    <property type="evidence" value="ECO:0007669"/>
    <property type="project" value="InterPro"/>
</dbReference>
<dbReference type="FunFam" id="3.30.200.160:FF:000001">
    <property type="entry name" value="General transcription factor IIIC subunit 5"/>
    <property type="match status" value="1"/>
</dbReference>
<dbReference type="Gene3D" id="3.30.200.160">
    <property type="entry name" value="TFIIIC, subcomplex tauA, subunit Sfc1, barrel domain"/>
    <property type="match status" value="1"/>
</dbReference>
<dbReference type="InterPro" id="IPR019136">
    <property type="entry name" value="TF_IIIC_su-5_HTH"/>
</dbReference>
<dbReference type="InterPro" id="IPR040454">
    <property type="entry name" value="TF_IIIC_Tfc1/Sfc1"/>
</dbReference>
<dbReference type="InterPro" id="IPR041499">
    <property type="entry name" value="Tfc1/Sfc1_N"/>
</dbReference>
<dbReference type="InterPro" id="IPR042536">
    <property type="entry name" value="TFIIIC_tauA_Sfc1"/>
</dbReference>
<dbReference type="PANTHER" id="PTHR13230:SF5">
    <property type="entry name" value="GENERAL TRANSCRIPTION FACTOR 3C POLYPEPTIDE 5"/>
    <property type="match status" value="1"/>
</dbReference>
<dbReference type="PANTHER" id="PTHR13230">
    <property type="entry name" value="GENERAL TRANSCRIPTION FACTOR IIIC, POLYPEPTIDE 5"/>
    <property type="match status" value="1"/>
</dbReference>
<dbReference type="Pfam" id="PF09734">
    <property type="entry name" value="Tau95"/>
    <property type="match status" value="1"/>
</dbReference>
<dbReference type="Pfam" id="PF17682">
    <property type="entry name" value="Tau95_N"/>
    <property type="match status" value="1"/>
</dbReference>
<protein>
    <recommendedName>
        <fullName>General transcription factor 3C polypeptide 5</fullName>
    </recommendedName>
    <alternativeName>
        <fullName>TF3C-epsilon</fullName>
    </alternativeName>
    <alternativeName>
        <fullName>Transcription factor IIIC 63 kDa subunit</fullName>
        <shortName>TFIIIC 63 kDa subunit</shortName>
        <shortName>TFIIIC63</shortName>
    </alternativeName>
    <alternativeName>
        <fullName>Transcription factor IIIC subunit epsilon</fullName>
    </alternativeName>
</protein>
<evidence type="ECO:0000250" key="1"/>
<evidence type="ECO:0000250" key="2">
    <source>
        <dbReference type="UniProtKB" id="Q9Y5Q8"/>
    </source>
</evidence>
<evidence type="ECO:0000256" key="3">
    <source>
        <dbReference type="SAM" id="MobiDB-lite"/>
    </source>
</evidence>
<evidence type="ECO:0000303" key="4">
    <source>
    </source>
</evidence>
<evidence type="ECO:0000303" key="5">
    <source>
    </source>
</evidence>
<evidence type="ECO:0000305" key="6"/>
<name>TF3C5_MOUSE</name>
<accession>Q8R2T8</accession>
<accession>Q8BLE3</accession>
<accession>Q8R0D0</accession>
<gene>
    <name type="primary">Gtf3c5</name>
</gene>
<keyword id="KW-0007">Acetylation</keyword>
<keyword id="KW-0025">Alternative splicing</keyword>
<keyword id="KW-0238">DNA-binding</keyword>
<keyword id="KW-0539">Nucleus</keyword>
<keyword id="KW-1185">Reference proteome</keyword>
<keyword id="KW-0804">Transcription</keyword>
<proteinExistence type="evidence at transcript level"/>
<comment type="function">
    <text evidence="1">Involved in RNA polymerase III-mediated transcription. Integral, tightly associated component of the DNA-binding TFIIIC2 subcomplex that directly binds tRNA and virus-associated RNA promoters (By similarity).</text>
</comment>
<comment type="subunit">
    <text evidence="1">Part of the TFIIIC subcomplex TFIIIC2, consisting of six subunits, GTF3C1, GTF3C2, GTF3C3, GTF3C4, GTF3C5 and GTF3C6. Interacts with BRF1, GTF3C6 and TBP (By similarity).</text>
</comment>
<comment type="subcellular location">
    <subcellularLocation>
        <location evidence="1">Nucleus</location>
    </subcellularLocation>
</comment>
<comment type="alternative products">
    <event type="alternative splicing"/>
    <isoform>
        <id>Q8R2T8-1</id>
        <name>1</name>
        <sequence type="displayed"/>
    </isoform>
    <isoform>
        <id>Q8R2T8-2</id>
        <name>2</name>
        <sequence type="described" ref="VSP_010356"/>
    </isoform>
</comment>
<comment type="similarity">
    <text evidence="6">Belongs to the TFIIIC subunit 5 family.</text>
</comment>